<name>PLSY_GEOSL</name>
<keyword id="KW-0997">Cell inner membrane</keyword>
<keyword id="KW-1003">Cell membrane</keyword>
<keyword id="KW-0444">Lipid biosynthesis</keyword>
<keyword id="KW-0443">Lipid metabolism</keyword>
<keyword id="KW-0472">Membrane</keyword>
<keyword id="KW-0594">Phospholipid biosynthesis</keyword>
<keyword id="KW-1208">Phospholipid metabolism</keyword>
<keyword id="KW-1185">Reference proteome</keyword>
<keyword id="KW-0808">Transferase</keyword>
<keyword id="KW-0812">Transmembrane</keyword>
<keyword id="KW-1133">Transmembrane helix</keyword>
<gene>
    <name evidence="1" type="primary">plsY</name>
    <name type="ordered locus">GSU0507</name>
</gene>
<sequence>MLNELILTAVAYIVGSIPTGLLLARASGVDIRATGSGNIGATNVYRTLGRTVGIATLLGDCLKGLVPVLVARKLGFADPWVAAVGLAAFLGHVYTIFLGFKGGKGVATALGVFLGVSPLSVLGALALFIGIVATTRYISLGSIIAAAAMPLFVAAVERRPLLVGMTLVIAVIVIVKHRENIRRLREGTENRFKA</sequence>
<organism>
    <name type="scientific">Geobacter sulfurreducens (strain ATCC 51573 / DSM 12127 / PCA)</name>
    <dbReference type="NCBI Taxonomy" id="243231"/>
    <lineage>
        <taxon>Bacteria</taxon>
        <taxon>Pseudomonadati</taxon>
        <taxon>Thermodesulfobacteriota</taxon>
        <taxon>Desulfuromonadia</taxon>
        <taxon>Geobacterales</taxon>
        <taxon>Geobacteraceae</taxon>
        <taxon>Geobacter</taxon>
    </lineage>
</organism>
<comment type="function">
    <text evidence="1">Catalyzes the transfer of an acyl group from acyl-phosphate (acyl-PO(4)) to glycerol-3-phosphate (G3P) to form lysophosphatidic acid (LPA). This enzyme utilizes acyl-phosphate as fatty acyl donor, but not acyl-CoA or acyl-ACP.</text>
</comment>
<comment type="catalytic activity">
    <reaction evidence="1">
        <text>an acyl phosphate + sn-glycerol 3-phosphate = a 1-acyl-sn-glycero-3-phosphate + phosphate</text>
        <dbReference type="Rhea" id="RHEA:34075"/>
        <dbReference type="ChEBI" id="CHEBI:43474"/>
        <dbReference type="ChEBI" id="CHEBI:57597"/>
        <dbReference type="ChEBI" id="CHEBI:57970"/>
        <dbReference type="ChEBI" id="CHEBI:59918"/>
        <dbReference type="EC" id="2.3.1.275"/>
    </reaction>
</comment>
<comment type="pathway">
    <text evidence="1">Lipid metabolism; phospholipid metabolism.</text>
</comment>
<comment type="subunit">
    <text evidence="1">Probably interacts with PlsX.</text>
</comment>
<comment type="subcellular location">
    <subcellularLocation>
        <location evidence="1">Cell inner membrane</location>
        <topology evidence="1">Multi-pass membrane protein</topology>
    </subcellularLocation>
</comment>
<comment type="similarity">
    <text evidence="1">Belongs to the PlsY family.</text>
</comment>
<proteinExistence type="inferred from homology"/>
<dbReference type="EC" id="2.3.1.275" evidence="1"/>
<dbReference type="EMBL" id="AE017180">
    <property type="protein sequence ID" value="AAR33838.1"/>
    <property type="molecule type" value="Genomic_DNA"/>
</dbReference>
<dbReference type="RefSeq" id="NP_951565.1">
    <property type="nucleotide sequence ID" value="NC_002939.5"/>
</dbReference>
<dbReference type="RefSeq" id="WP_010941175.1">
    <property type="nucleotide sequence ID" value="NC_002939.5"/>
</dbReference>
<dbReference type="SMR" id="P60926"/>
<dbReference type="FunCoup" id="P60926">
    <property type="interactions" value="252"/>
</dbReference>
<dbReference type="STRING" id="243231.GSU0507"/>
<dbReference type="EnsemblBacteria" id="AAR33838">
    <property type="protein sequence ID" value="AAR33838"/>
    <property type="gene ID" value="GSU0507"/>
</dbReference>
<dbReference type="KEGG" id="gsu:GSU0507"/>
<dbReference type="PATRIC" id="fig|243231.5.peg.508"/>
<dbReference type="eggNOG" id="COG0344">
    <property type="taxonomic scope" value="Bacteria"/>
</dbReference>
<dbReference type="HOGENOM" id="CLU_081254_7_1_7"/>
<dbReference type="InParanoid" id="P60926"/>
<dbReference type="OrthoDB" id="9777124at2"/>
<dbReference type="UniPathway" id="UPA00085"/>
<dbReference type="Proteomes" id="UP000000577">
    <property type="component" value="Chromosome"/>
</dbReference>
<dbReference type="GO" id="GO:0005886">
    <property type="term" value="C:plasma membrane"/>
    <property type="evidence" value="ECO:0000318"/>
    <property type="project" value="GO_Central"/>
</dbReference>
<dbReference type="GO" id="GO:0043772">
    <property type="term" value="F:acyl-phosphate glycerol-3-phosphate acyltransferase activity"/>
    <property type="evidence" value="ECO:0007669"/>
    <property type="project" value="UniProtKB-UniRule"/>
</dbReference>
<dbReference type="GO" id="GO:0008654">
    <property type="term" value="P:phospholipid biosynthetic process"/>
    <property type="evidence" value="ECO:0007669"/>
    <property type="project" value="UniProtKB-UniRule"/>
</dbReference>
<dbReference type="HAMAP" id="MF_01043">
    <property type="entry name" value="PlsY"/>
    <property type="match status" value="1"/>
</dbReference>
<dbReference type="InterPro" id="IPR003811">
    <property type="entry name" value="G3P_acylTferase_PlsY"/>
</dbReference>
<dbReference type="NCBIfam" id="TIGR00023">
    <property type="entry name" value="glycerol-3-phosphate 1-O-acyltransferase PlsY"/>
    <property type="match status" value="1"/>
</dbReference>
<dbReference type="PANTHER" id="PTHR30309:SF0">
    <property type="entry name" value="GLYCEROL-3-PHOSPHATE ACYLTRANSFERASE-RELATED"/>
    <property type="match status" value="1"/>
</dbReference>
<dbReference type="PANTHER" id="PTHR30309">
    <property type="entry name" value="INNER MEMBRANE PROTEIN YGIH"/>
    <property type="match status" value="1"/>
</dbReference>
<dbReference type="Pfam" id="PF02660">
    <property type="entry name" value="G3P_acyltransf"/>
    <property type="match status" value="1"/>
</dbReference>
<dbReference type="SMART" id="SM01207">
    <property type="entry name" value="G3P_acyltransf"/>
    <property type="match status" value="1"/>
</dbReference>
<accession>P60926</accession>
<protein>
    <recommendedName>
        <fullName evidence="1">Glycerol-3-phosphate acyltransferase</fullName>
    </recommendedName>
    <alternativeName>
        <fullName evidence="1">Acyl-PO4 G3P acyltransferase</fullName>
    </alternativeName>
    <alternativeName>
        <fullName evidence="1">Acyl-phosphate--glycerol-3-phosphate acyltransferase</fullName>
    </alternativeName>
    <alternativeName>
        <fullName evidence="1">G3P acyltransferase</fullName>
        <shortName evidence="1">GPAT</shortName>
        <ecNumber evidence="1">2.3.1.275</ecNumber>
    </alternativeName>
    <alternativeName>
        <fullName evidence="1">Lysophosphatidic acid synthase</fullName>
        <shortName evidence="1">LPA synthase</shortName>
    </alternativeName>
</protein>
<evidence type="ECO:0000255" key="1">
    <source>
        <dbReference type="HAMAP-Rule" id="MF_01043"/>
    </source>
</evidence>
<reference key="1">
    <citation type="journal article" date="2003" name="Science">
        <title>Genome of Geobacter sulfurreducens: metal reduction in subsurface environments.</title>
        <authorList>
            <person name="Methe B.A."/>
            <person name="Nelson K.E."/>
            <person name="Eisen J.A."/>
            <person name="Paulsen I.T."/>
            <person name="Nelson W.C."/>
            <person name="Heidelberg J.F."/>
            <person name="Wu D."/>
            <person name="Wu M."/>
            <person name="Ward N.L."/>
            <person name="Beanan M.J."/>
            <person name="Dodson R.J."/>
            <person name="Madupu R."/>
            <person name="Brinkac L.M."/>
            <person name="Daugherty S.C."/>
            <person name="DeBoy R.T."/>
            <person name="Durkin A.S."/>
            <person name="Gwinn M.L."/>
            <person name="Kolonay J.F."/>
            <person name="Sullivan S.A."/>
            <person name="Haft D.H."/>
            <person name="Selengut J."/>
            <person name="Davidsen T.M."/>
            <person name="Zafar N."/>
            <person name="White O."/>
            <person name="Tran B."/>
            <person name="Romero C."/>
            <person name="Forberger H.A."/>
            <person name="Weidman J.F."/>
            <person name="Khouri H.M."/>
            <person name="Feldblyum T.V."/>
            <person name="Utterback T.R."/>
            <person name="Van Aken S.E."/>
            <person name="Lovley D.R."/>
            <person name="Fraser C.M."/>
        </authorList>
    </citation>
    <scope>NUCLEOTIDE SEQUENCE [LARGE SCALE GENOMIC DNA]</scope>
    <source>
        <strain>ATCC 51573 / DSM 12127 / PCA</strain>
    </source>
</reference>
<feature type="chain" id="PRO_0000188374" description="Glycerol-3-phosphate acyltransferase">
    <location>
        <begin position="1"/>
        <end position="194"/>
    </location>
</feature>
<feature type="transmembrane region" description="Helical" evidence="1">
    <location>
        <begin position="4"/>
        <end position="24"/>
    </location>
</feature>
<feature type="transmembrane region" description="Helical" evidence="1">
    <location>
        <begin position="80"/>
        <end position="100"/>
    </location>
</feature>
<feature type="transmembrane region" description="Helical" evidence="1">
    <location>
        <begin position="112"/>
        <end position="132"/>
    </location>
</feature>
<feature type="transmembrane region" description="Helical" evidence="1">
    <location>
        <begin position="137"/>
        <end position="157"/>
    </location>
</feature>
<feature type="transmembrane region" description="Helical" evidence="1">
    <location>
        <begin position="161"/>
        <end position="181"/>
    </location>
</feature>